<protein>
    <recommendedName>
        <fullName evidence="1">TDP-N-acetylfucosamine:lipid II N-acetylfucosaminyltransferase</fullName>
        <ecNumber evidence="1">2.4.1.325</ecNumber>
    </recommendedName>
    <alternativeName>
        <fullName evidence="1">4-alpha-L-fucosyltransferase</fullName>
    </alternativeName>
    <alternativeName>
        <fullName evidence="1">TDP-Fuc4NAc:lipid II Fuc4NAc transferase</fullName>
        <shortName evidence="1">Fuc4NAc transferase</shortName>
    </alternativeName>
</protein>
<comment type="function">
    <text evidence="1">Catalyzes the synthesis of Und-PP-GlcNAc-ManNAcA-Fuc4NAc (Lipid III), the third lipid-linked intermediate involved in ECA synthesis.</text>
</comment>
<comment type="catalytic activity">
    <reaction evidence="1">
        <text>beta-D-ManNAcA-(1-&gt;4)-alpha-D-GlcNAc-di-trans,octa-cis-undecaprenyl diphosphate + dTDP-4-acetamido-4,6-dideoxy-alpha-D-galactose = alpha-D-FucNAc4-(1-&gt;4)-beta-D-ManNAcA-(1-&gt;4)-D-GlcNAc-undecaprenyl diphosphate + dTDP + H(+)</text>
        <dbReference type="Rhea" id="RHEA:28759"/>
        <dbReference type="ChEBI" id="CHEBI:15378"/>
        <dbReference type="ChEBI" id="CHEBI:58369"/>
        <dbReference type="ChEBI" id="CHEBI:61495"/>
        <dbReference type="ChEBI" id="CHEBI:61496"/>
        <dbReference type="ChEBI" id="CHEBI:68493"/>
        <dbReference type="EC" id="2.4.1.325"/>
    </reaction>
</comment>
<comment type="pathway">
    <text evidence="1">Bacterial outer membrane biogenesis; enterobacterial common antigen biosynthesis.</text>
</comment>
<comment type="subcellular location">
    <subcellularLocation>
        <location evidence="1">Cell inner membrane</location>
        <topology evidence="1">Peripheral membrane protein</topology>
    </subcellularLocation>
</comment>
<comment type="similarity">
    <text evidence="1">Belongs to the glycosyltransferase 56 family.</text>
</comment>
<accession>B4TB25</accession>
<feature type="chain" id="PRO_1000134607" description="TDP-N-acetylfucosamine:lipid II N-acetylfucosaminyltransferase">
    <location>
        <begin position="1"/>
        <end position="359"/>
    </location>
</feature>
<evidence type="ECO:0000255" key="1">
    <source>
        <dbReference type="HAMAP-Rule" id="MF_01002"/>
    </source>
</evidence>
<name>WECF_SALHS</name>
<sequence>MTVLIHVLGSDIPHHNHTVLRFFNDTLAATSEHAREFMVAGEDNGFTESCPALSLRFYGSKKALAQAVIAKAKANRRQRFFFHGQFNTSLWLALLSGGIKPAQFYWHIWGADLYEVSHGLKFRLFYPLRRIAQGRVGCVFATRGDLSYFARQHPDVRGELLYFPTRMDPSLNAMAKERQRAGKLTILVGNSGDRSNQHIAALRAVYQQFGDTVNVVVPMGYPANNQAYIDEVRQAGLALFSDENLQILSEKMEFDAYLALLRQCDLGYFIFARQQGIGTLCLLIQADIPCVLNRDNPFWQDMAEQHLPVLFTTDDLNEQVVREAQRQLASVDKSGITFFSPNYLQPWHNALRIAAGEAE</sequence>
<gene>
    <name evidence="1" type="primary">wecF</name>
    <name evidence="1" type="synonym">rffT</name>
    <name type="ordered locus">SeHA_C4256</name>
</gene>
<keyword id="KW-0997">Cell inner membrane</keyword>
<keyword id="KW-1003">Cell membrane</keyword>
<keyword id="KW-0328">Glycosyltransferase</keyword>
<keyword id="KW-0472">Membrane</keyword>
<keyword id="KW-0808">Transferase</keyword>
<reference key="1">
    <citation type="journal article" date="2011" name="J. Bacteriol.">
        <title>Comparative genomics of 28 Salmonella enterica isolates: evidence for CRISPR-mediated adaptive sublineage evolution.</title>
        <authorList>
            <person name="Fricke W.F."/>
            <person name="Mammel M.K."/>
            <person name="McDermott P.F."/>
            <person name="Tartera C."/>
            <person name="White D.G."/>
            <person name="Leclerc J.E."/>
            <person name="Ravel J."/>
            <person name="Cebula T.A."/>
        </authorList>
    </citation>
    <scope>NUCLEOTIDE SEQUENCE [LARGE SCALE GENOMIC DNA]</scope>
    <source>
        <strain>SL476</strain>
    </source>
</reference>
<dbReference type="EC" id="2.4.1.325" evidence="1"/>
<dbReference type="EMBL" id="CP001120">
    <property type="protein sequence ID" value="ACF68716.1"/>
    <property type="molecule type" value="Genomic_DNA"/>
</dbReference>
<dbReference type="RefSeq" id="WP_000217183.1">
    <property type="nucleotide sequence ID" value="NC_011083.1"/>
</dbReference>
<dbReference type="CAZy" id="GT56">
    <property type="family name" value="Glycosyltransferase Family 56"/>
</dbReference>
<dbReference type="KEGG" id="seh:SeHA_C4256"/>
<dbReference type="HOGENOM" id="CLU_066584_0_0_6"/>
<dbReference type="UniPathway" id="UPA00566"/>
<dbReference type="Proteomes" id="UP000001866">
    <property type="component" value="Chromosome"/>
</dbReference>
<dbReference type="GO" id="GO:0005886">
    <property type="term" value="C:plasma membrane"/>
    <property type="evidence" value="ECO:0007669"/>
    <property type="project" value="UniProtKB-SubCell"/>
</dbReference>
<dbReference type="GO" id="GO:0102031">
    <property type="term" value="F:4-acetamido-4,6-dideoxy-D-galactose transferase activity"/>
    <property type="evidence" value="ECO:0007669"/>
    <property type="project" value="UniProtKB-EC"/>
</dbReference>
<dbReference type="GO" id="GO:0008417">
    <property type="term" value="F:fucosyltransferase activity"/>
    <property type="evidence" value="ECO:0007669"/>
    <property type="project" value="InterPro"/>
</dbReference>
<dbReference type="GO" id="GO:0009246">
    <property type="term" value="P:enterobacterial common antigen biosynthetic process"/>
    <property type="evidence" value="ECO:0007669"/>
    <property type="project" value="UniProtKB-UniRule"/>
</dbReference>
<dbReference type="GO" id="GO:0036065">
    <property type="term" value="P:fucosylation"/>
    <property type="evidence" value="ECO:0007669"/>
    <property type="project" value="InterPro"/>
</dbReference>
<dbReference type="HAMAP" id="MF_01002">
    <property type="entry name" value="WecF_RffT"/>
    <property type="match status" value="1"/>
</dbReference>
<dbReference type="InterPro" id="IPR009993">
    <property type="entry name" value="WecF"/>
</dbReference>
<dbReference type="NCBIfam" id="NF002753">
    <property type="entry name" value="PRK02797.1-2"/>
    <property type="match status" value="1"/>
</dbReference>
<dbReference type="NCBIfam" id="NF002754">
    <property type="entry name" value="PRK02797.1-3"/>
    <property type="match status" value="1"/>
</dbReference>
<dbReference type="Pfam" id="PF07429">
    <property type="entry name" value="Glyco_transf_56"/>
    <property type="match status" value="1"/>
</dbReference>
<proteinExistence type="inferred from homology"/>
<organism>
    <name type="scientific">Salmonella heidelberg (strain SL476)</name>
    <dbReference type="NCBI Taxonomy" id="454169"/>
    <lineage>
        <taxon>Bacteria</taxon>
        <taxon>Pseudomonadati</taxon>
        <taxon>Pseudomonadota</taxon>
        <taxon>Gammaproteobacteria</taxon>
        <taxon>Enterobacterales</taxon>
        <taxon>Enterobacteriaceae</taxon>
        <taxon>Salmonella</taxon>
    </lineage>
</organism>